<feature type="chain" id="PRO_0000137996" description="Glycerol-3-phosphate dehydrogenase [NAD(P)+] 2">
    <location>
        <begin position="1"/>
        <end position="334"/>
    </location>
</feature>
<feature type="active site" description="Proton acceptor" evidence="1">
    <location>
        <position position="195"/>
    </location>
</feature>
<feature type="binding site" evidence="1">
    <location>
        <position position="16"/>
    </location>
    <ligand>
        <name>NADPH</name>
        <dbReference type="ChEBI" id="CHEBI:57783"/>
    </ligand>
</feature>
<feature type="binding site" evidence="1">
    <location>
        <position position="36"/>
    </location>
    <ligand>
        <name>NADPH</name>
        <dbReference type="ChEBI" id="CHEBI:57783"/>
    </ligand>
</feature>
<feature type="binding site" evidence="1">
    <location>
        <position position="37"/>
    </location>
    <ligand>
        <name>NADPH</name>
        <dbReference type="ChEBI" id="CHEBI:57783"/>
    </ligand>
</feature>
<feature type="binding site" evidence="1">
    <location>
        <position position="110"/>
    </location>
    <ligand>
        <name>NADPH</name>
        <dbReference type="ChEBI" id="CHEBI:57783"/>
    </ligand>
</feature>
<feature type="binding site" evidence="1">
    <location>
        <position position="110"/>
    </location>
    <ligand>
        <name>sn-glycerol 3-phosphate</name>
        <dbReference type="ChEBI" id="CHEBI:57597"/>
    </ligand>
</feature>
<feature type="binding site" evidence="1">
    <location>
        <position position="140"/>
    </location>
    <ligand>
        <name>sn-glycerol 3-phosphate</name>
        <dbReference type="ChEBI" id="CHEBI:57597"/>
    </ligand>
</feature>
<feature type="binding site" evidence="1">
    <location>
        <position position="144"/>
    </location>
    <ligand>
        <name>NADPH</name>
        <dbReference type="ChEBI" id="CHEBI:57783"/>
    </ligand>
</feature>
<feature type="binding site" evidence="1">
    <location>
        <position position="195"/>
    </location>
    <ligand>
        <name>sn-glycerol 3-phosphate</name>
        <dbReference type="ChEBI" id="CHEBI:57597"/>
    </ligand>
</feature>
<feature type="binding site" evidence="1">
    <location>
        <position position="248"/>
    </location>
    <ligand>
        <name>sn-glycerol 3-phosphate</name>
        <dbReference type="ChEBI" id="CHEBI:57597"/>
    </ligand>
</feature>
<feature type="binding site" evidence="1">
    <location>
        <position position="258"/>
    </location>
    <ligand>
        <name>sn-glycerol 3-phosphate</name>
        <dbReference type="ChEBI" id="CHEBI:57597"/>
    </ligand>
</feature>
<feature type="binding site" evidence="1">
    <location>
        <position position="259"/>
    </location>
    <ligand>
        <name>NADPH</name>
        <dbReference type="ChEBI" id="CHEBI:57783"/>
    </ligand>
</feature>
<feature type="binding site" evidence="1">
    <location>
        <position position="259"/>
    </location>
    <ligand>
        <name>sn-glycerol 3-phosphate</name>
        <dbReference type="ChEBI" id="CHEBI:57597"/>
    </ligand>
</feature>
<feature type="binding site" evidence="1">
    <location>
        <position position="260"/>
    </location>
    <ligand>
        <name>sn-glycerol 3-phosphate</name>
        <dbReference type="ChEBI" id="CHEBI:57597"/>
    </ligand>
</feature>
<feature type="binding site" evidence="1">
    <location>
        <position position="282"/>
    </location>
    <ligand>
        <name>NADPH</name>
        <dbReference type="ChEBI" id="CHEBI:57783"/>
    </ligand>
</feature>
<feature type="binding site" evidence="1">
    <location>
        <position position="284"/>
    </location>
    <ligand>
        <name>NADPH</name>
        <dbReference type="ChEBI" id="CHEBI:57783"/>
    </ligand>
</feature>
<dbReference type="EC" id="1.1.1.94" evidence="1"/>
<dbReference type="EMBL" id="AL123456">
    <property type="protein sequence ID" value="CCP45787.1"/>
    <property type="molecule type" value="Genomic_DNA"/>
</dbReference>
<dbReference type="PIR" id="C70673">
    <property type="entry name" value="C70673"/>
</dbReference>
<dbReference type="RefSeq" id="NP_217498.1">
    <property type="nucleotide sequence ID" value="NC_000962.3"/>
</dbReference>
<dbReference type="RefSeq" id="WP_003917087.1">
    <property type="nucleotide sequence ID" value="NZ_NVQJ01000099.1"/>
</dbReference>
<dbReference type="SMR" id="P9WN77"/>
<dbReference type="FunCoup" id="P9WN77">
    <property type="interactions" value="341"/>
</dbReference>
<dbReference type="STRING" id="83332.Rv2982c"/>
<dbReference type="PaxDb" id="83332-Rv2982c"/>
<dbReference type="DNASU" id="887864"/>
<dbReference type="GeneID" id="887864"/>
<dbReference type="KEGG" id="mtu:Rv2982c"/>
<dbReference type="KEGG" id="mtv:RVBD_2982c"/>
<dbReference type="TubercuList" id="Rv2982c"/>
<dbReference type="eggNOG" id="COG0240">
    <property type="taxonomic scope" value="Bacteria"/>
</dbReference>
<dbReference type="InParanoid" id="P9WN77"/>
<dbReference type="OrthoDB" id="9812273at2"/>
<dbReference type="PhylomeDB" id="P9WN77"/>
<dbReference type="UniPathway" id="UPA00940"/>
<dbReference type="Proteomes" id="UP000001584">
    <property type="component" value="Chromosome"/>
</dbReference>
<dbReference type="GO" id="GO:0005829">
    <property type="term" value="C:cytosol"/>
    <property type="evidence" value="ECO:0000318"/>
    <property type="project" value="GO_Central"/>
</dbReference>
<dbReference type="GO" id="GO:0005886">
    <property type="term" value="C:plasma membrane"/>
    <property type="evidence" value="ECO:0007005"/>
    <property type="project" value="MTBBASE"/>
</dbReference>
<dbReference type="GO" id="GO:0047952">
    <property type="term" value="F:glycerol-3-phosphate dehydrogenase [NAD(P)+] activity"/>
    <property type="evidence" value="ECO:0000318"/>
    <property type="project" value="GO_Central"/>
</dbReference>
<dbReference type="GO" id="GO:0051287">
    <property type="term" value="F:NAD binding"/>
    <property type="evidence" value="ECO:0007669"/>
    <property type="project" value="InterPro"/>
</dbReference>
<dbReference type="GO" id="GO:0005975">
    <property type="term" value="P:carbohydrate metabolic process"/>
    <property type="evidence" value="ECO:0007669"/>
    <property type="project" value="InterPro"/>
</dbReference>
<dbReference type="GO" id="GO:0046167">
    <property type="term" value="P:glycerol-3-phosphate biosynthetic process"/>
    <property type="evidence" value="ECO:0007669"/>
    <property type="project" value="UniProtKB-UniRule"/>
</dbReference>
<dbReference type="GO" id="GO:0046168">
    <property type="term" value="P:glycerol-3-phosphate catabolic process"/>
    <property type="evidence" value="ECO:0007669"/>
    <property type="project" value="InterPro"/>
</dbReference>
<dbReference type="GO" id="GO:0006072">
    <property type="term" value="P:glycerol-3-phosphate metabolic process"/>
    <property type="evidence" value="ECO:0000318"/>
    <property type="project" value="GO_Central"/>
</dbReference>
<dbReference type="GO" id="GO:0006650">
    <property type="term" value="P:glycerophospholipid metabolic process"/>
    <property type="evidence" value="ECO:0007669"/>
    <property type="project" value="UniProtKB-UniRule"/>
</dbReference>
<dbReference type="GO" id="GO:0008654">
    <property type="term" value="P:phospholipid biosynthetic process"/>
    <property type="evidence" value="ECO:0007669"/>
    <property type="project" value="UniProtKB-KW"/>
</dbReference>
<dbReference type="FunFam" id="1.10.1040.10:FF:000001">
    <property type="entry name" value="Glycerol-3-phosphate dehydrogenase [NAD(P)+]"/>
    <property type="match status" value="1"/>
</dbReference>
<dbReference type="FunFam" id="3.40.50.720:FF:000019">
    <property type="entry name" value="Glycerol-3-phosphate dehydrogenase [NAD(P)+]"/>
    <property type="match status" value="1"/>
</dbReference>
<dbReference type="Gene3D" id="1.10.1040.10">
    <property type="entry name" value="N-(1-d-carboxylethyl)-l-norvaline Dehydrogenase, domain 2"/>
    <property type="match status" value="1"/>
</dbReference>
<dbReference type="Gene3D" id="3.40.50.720">
    <property type="entry name" value="NAD(P)-binding Rossmann-like Domain"/>
    <property type="match status" value="1"/>
</dbReference>
<dbReference type="HAMAP" id="MF_00394">
    <property type="entry name" value="NAD_Glyc3P_dehydrog"/>
    <property type="match status" value="1"/>
</dbReference>
<dbReference type="InterPro" id="IPR008927">
    <property type="entry name" value="6-PGluconate_DH-like_C_sf"/>
</dbReference>
<dbReference type="InterPro" id="IPR013328">
    <property type="entry name" value="6PGD_dom2"/>
</dbReference>
<dbReference type="InterPro" id="IPR006168">
    <property type="entry name" value="G3P_DH_NAD-dep"/>
</dbReference>
<dbReference type="InterPro" id="IPR006109">
    <property type="entry name" value="G3P_DH_NAD-dep_C"/>
</dbReference>
<dbReference type="InterPro" id="IPR011128">
    <property type="entry name" value="G3P_DH_NAD-dep_N"/>
</dbReference>
<dbReference type="InterPro" id="IPR036291">
    <property type="entry name" value="NAD(P)-bd_dom_sf"/>
</dbReference>
<dbReference type="NCBIfam" id="NF000940">
    <property type="entry name" value="PRK00094.1-2"/>
    <property type="match status" value="1"/>
</dbReference>
<dbReference type="NCBIfam" id="NF000942">
    <property type="entry name" value="PRK00094.1-4"/>
    <property type="match status" value="1"/>
</dbReference>
<dbReference type="PANTHER" id="PTHR11728">
    <property type="entry name" value="GLYCEROL-3-PHOSPHATE DEHYDROGENASE"/>
    <property type="match status" value="1"/>
</dbReference>
<dbReference type="PANTHER" id="PTHR11728:SF1">
    <property type="entry name" value="GLYCEROL-3-PHOSPHATE DEHYDROGENASE [NAD(+)] 2, CHLOROPLASTIC"/>
    <property type="match status" value="1"/>
</dbReference>
<dbReference type="Pfam" id="PF07479">
    <property type="entry name" value="NAD_Gly3P_dh_C"/>
    <property type="match status" value="1"/>
</dbReference>
<dbReference type="Pfam" id="PF01210">
    <property type="entry name" value="NAD_Gly3P_dh_N"/>
    <property type="match status" value="1"/>
</dbReference>
<dbReference type="PIRSF" id="PIRSF000114">
    <property type="entry name" value="Glycerol-3-P_dh"/>
    <property type="match status" value="1"/>
</dbReference>
<dbReference type="PRINTS" id="PR00077">
    <property type="entry name" value="GPDHDRGNASE"/>
</dbReference>
<dbReference type="SUPFAM" id="SSF48179">
    <property type="entry name" value="6-phosphogluconate dehydrogenase C-terminal domain-like"/>
    <property type="match status" value="1"/>
</dbReference>
<dbReference type="SUPFAM" id="SSF51735">
    <property type="entry name" value="NAD(P)-binding Rossmann-fold domains"/>
    <property type="match status" value="1"/>
</dbReference>
<dbReference type="PROSITE" id="PS00957">
    <property type="entry name" value="NAD_G3PDH"/>
    <property type="match status" value="1"/>
</dbReference>
<sequence length="334" mass="33992">MAGIASTVAVMGAGAWGTALAKVLADAGGEVTLWARRAEVADQINTTRYNPDYLPGALLPPSIHATADAEEALGGASTVLLGVPAQTMRANLERWAPLLPEGATLVSLAKGIELGTLMRMSQVIISVTGAEPPQVAVISGPNLASEIAECQPAATVVACSDSGRAVALQRALNSGYFRPYTNADVVGTEIGGACKNIIALACGMAVGIGLGENTAAAIITRGLAEIIRLGTALGANGATLAGLAGVGDLVATCTSPRSRNRSFGERLGRGETLQSAGKACHVVEGVTSCESVLALASSYDVEMPLTDAVHRVCHKGLSVDEAITLLLGRRTKPE</sequence>
<comment type="function">
    <text evidence="1">Catalyzes the reduction of the glycolytic intermediate dihydroxyacetone phosphate (DHAP) to sn-glycerol 3-phosphate (G3P), the key precursor for phospholipid synthesis.</text>
</comment>
<comment type="catalytic activity">
    <reaction evidence="1">
        <text>sn-glycerol 3-phosphate + NAD(+) = dihydroxyacetone phosphate + NADH + H(+)</text>
        <dbReference type="Rhea" id="RHEA:11092"/>
        <dbReference type="ChEBI" id="CHEBI:15378"/>
        <dbReference type="ChEBI" id="CHEBI:57540"/>
        <dbReference type="ChEBI" id="CHEBI:57597"/>
        <dbReference type="ChEBI" id="CHEBI:57642"/>
        <dbReference type="ChEBI" id="CHEBI:57945"/>
        <dbReference type="EC" id="1.1.1.94"/>
    </reaction>
    <physiologicalReaction direction="right-to-left" evidence="1">
        <dbReference type="Rhea" id="RHEA:11094"/>
    </physiologicalReaction>
</comment>
<comment type="catalytic activity">
    <reaction evidence="1">
        <text>sn-glycerol 3-phosphate + NADP(+) = dihydroxyacetone phosphate + NADPH + H(+)</text>
        <dbReference type="Rhea" id="RHEA:11096"/>
        <dbReference type="ChEBI" id="CHEBI:15378"/>
        <dbReference type="ChEBI" id="CHEBI:57597"/>
        <dbReference type="ChEBI" id="CHEBI:57642"/>
        <dbReference type="ChEBI" id="CHEBI:57783"/>
        <dbReference type="ChEBI" id="CHEBI:58349"/>
        <dbReference type="EC" id="1.1.1.94"/>
    </reaction>
    <physiologicalReaction direction="right-to-left" evidence="1">
        <dbReference type="Rhea" id="RHEA:11098"/>
    </physiologicalReaction>
</comment>
<comment type="pathway">
    <text evidence="1">Membrane lipid metabolism; glycerophospholipid metabolism.</text>
</comment>
<comment type="subcellular location">
    <subcellularLocation>
        <location evidence="1">Cytoplasm</location>
    </subcellularLocation>
</comment>
<comment type="similarity">
    <text evidence="1">Belongs to the NAD-dependent glycerol-3-phosphate dehydrogenase family.</text>
</comment>
<proteinExistence type="evidence at protein level"/>
<gene>
    <name evidence="1" type="primary">gpsA2</name>
    <name type="synonym">gpdA2</name>
    <name type="ordered locus">Rv2982c</name>
    <name type="ORF">MTCY349.05</name>
</gene>
<reference key="1">
    <citation type="journal article" date="1998" name="Nature">
        <title>Deciphering the biology of Mycobacterium tuberculosis from the complete genome sequence.</title>
        <authorList>
            <person name="Cole S.T."/>
            <person name="Brosch R."/>
            <person name="Parkhill J."/>
            <person name="Garnier T."/>
            <person name="Churcher C.M."/>
            <person name="Harris D.E."/>
            <person name="Gordon S.V."/>
            <person name="Eiglmeier K."/>
            <person name="Gas S."/>
            <person name="Barry C.E. III"/>
            <person name="Tekaia F."/>
            <person name="Badcock K."/>
            <person name="Basham D."/>
            <person name="Brown D."/>
            <person name="Chillingworth T."/>
            <person name="Connor R."/>
            <person name="Davies R.M."/>
            <person name="Devlin K."/>
            <person name="Feltwell T."/>
            <person name="Gentles S."/>
            <person name="Hamlin N."/>
            <person name="Holroyd S."/>
            <person name="Hornsby T."/>
            <person name="Jagels K."/>
            <person name="Krogh A."/>
            <person name="McLean J."/>
            <person name="Moule S."/>
            <person name="Murphy L.D."/>
            <person name="Oliver S."/>
            <person name="Osborne J."/>
            <person name="Quail M.A."/>
            <person name="Rajandream M.A."/>
            <person name="Rogers J."/>
            <person name="Rutter S."/>
            <person name="Seeger K."/>
            <person name="Skelton S."/>
            <person name="Squares S."/>
            <person name="Squares R."/>
            <person name="Sulston J.E."/>
            <person name="Taylor K."/>
            <person name="Whitehead S."/>
            <person name="Barrell B.G."/>
        </authorList>
    </citation>
    <scope>NUCLEOTIDE SEQUENCE [LARGE SCALE GENOMIC DNA]</scope>
    <source>
        <strain>ATCC 25618 / H37Rv</strain>
    </source>
</reference>
<reference key="2">
    <citation type="journal article" date="2011" name="Mol. Cell. Proteomics">
        <title>Proteogenomic analysis of Mycobacterium tuberculosis by high resolution mass spectrometry.</title>
        <authorList>
            <person name="Kelkar D.S."/>
            <person name="Kumar D."/>
            <person name="Kumar P."/>
            <person name="Balakrishnan L."/>
            <person name="Muthusamy B."/>
            <person name="Yadav A.K."/>
            <person name="Shrivastava P."/>
            <person name="Marimuthu A."/>
            <person name="Anand S."/>
            <person name="Sundaram H."/>
            <person name="Kingsbury R."/>
            <person name="Harsha H.C."/>
            <person name="Nair B."/>
            <person name="Prasad T.S."/>
            <person name="Chauhan D.S."/>
            <person name="Katoch K."/>
            <person name="Katoch V.M."/>
            <person name="Kumar P."/>
            <person name="Chaerkady R."/>
            <person name="Ramachandran S."/>
            <person name="Dash D."/>
            <person name="Pandey A."/>
        </authorList>
    </citation>
    <scope>IDENTIFICATION BY MASS SPECTROMETRY [LARGE SCALE ANALYSIS]</scope>
    <source>
        <strain>ATCC 25618 / H37Rv</strain>
    </source>
</reference>
<organism>
    <name type="scientific">Mycobacterium tuberculosis (strain ATCC 25618 / H37Rv)</name>
    <dbReference type="NCBI Taxonomy" id="83332"/>
    <lineage>
        <taxon>Bacteria</taxon>
        <taxon>Bacillati</taxon>
        <taxon>Actinomycetota</taxon>
        <taxon>Actinomycetes</taxon>
        <taxon>Mycobacteriales</taxon>
        <taxon>Mycobacteriaceae</taxon>
        <taxon>Mycobacterium</taxon>
        <taxon>Mycobacterium tuberculosis complex</taxon>
    </lineage>
</organism>
<protein>
    <recommendedName>
        <fullName evidence="1">Glycerol-3-phosphate dehydrogenase [NAD(P)+] 2</fullName>
        <ecNumber evidence="1">1.1.1.94</ecNumber>
    </recommendedName>
    <alternativeName>
        <fullName evidence="1">NAD(P)(+)-dependent glycerol-3-phosphate dehydrogenase 2</fullName>
    </alternativeName>
    <alternativeName>
        <fullName evidence="1">NAD(P)H-dependent dihydroxyacetone-phosphate reductase 2</fullName>
    </alternativeName>
</protein>
<accession>P9WN77</accession>
<accession>L0TE49</accession>
<accession>P95113</accession>
<name>GPDA2_MYCTU</name>
<evidence type="ECO:0000255" key="1">
    <source>
        <dbReference type="HAMAP-Rule" id="MF_00394"/>
    </source>
</evidence>
<keyword id="KW-0963">Cytoplasm</keyword>
<keyword id="KW-0444">Lipid biosynthesis</keyword>
<keyword id="KW-0443">Lipid metabolism</keyword>
<keyword id="KW-0520">NAD</keyword>
<keyword id="KW-0521">NADP</keyword>
<keyword id="KW-0547">Nucleotide-binding</keyword>
<keyword id="KW-0560">Oxidoreductase</keyword>
<keyword id="KW-0594">Phospholipid biosynthesis</keyword>
<keyword id="KW-1208">Phospholipid metabolism</keyword>
<keyword id="KW-1185">Reference proteome</keyword>